<comment type="function">
    <text>Mitochondrial membrane ATP synthase (F(1)F(0) ATP synthase or Complex V) produces ATP from ADP in the presence of a proton gradient across the membrane which is generated by electron transport complexes of the respiratory chain. F-type ATPases consist of two structural domains, F(1) - containing the extramembraneous catalytic core, and F(0) - containing the membrane proton channel, linked together by a central stalk and a peripheral stalk. During catalysis, ATP synthesis in the catalytic domain of F(1) is coupled via a rotary mechanism of the central stalk subunits to proton translocation. Subunits alpha and beta form the catalytic core in F(1). Rotation of the central stalk against the surrounding alpha(3)beta(3) subunits leads to hydrolysis of ATP in three separate catalytic sites on the beta subunits.</text>
</comment>
<comment type="catalytic activity">
    <reaction>
        <text>ATP + H2O + 4 H(+)(in) = ADP + phosphate + 5 H(+)(out)</text>
        <dbReference type="Rhea" id="RHEA:57720"/>
        <dbReference type="ChEBI" id="CHEBI:15377"/>
        <dbReference type="ChEBI" id="CHEBI:15378"/>
        <dbReference type="ChEBI" id="CHEBI:30616"/>
        <dbReference type="ChEBI" id="CHEBI:43474"/>
        <dbReference type="ChEBI" id="CHEBI:456216"/>
        <dbReference type="EC" id="7.1.2.2"/>
    </reaction>
</comment>
<comment type="subunit">
    <text>F-type ATPases have 2 components, CF(1) - the catalytic core - and CF(0) - the membrane proton channel. CF(1) has five subunits: alpha(3), beta(3), gamma(1), delta(1), epsilon(1). CF(0) has three main subunits: a, b and c.</text>
</comment>
<comment type="subcellular location">
    <subcellularLocation>
        <location>Mitochondrion</location>
    </subcellularLocation>
    <subcellularLocation>
        <location>Mitochondrion inner membrane</location>
    </subcellularLocation>
    <text>Peripheral membrane protein.</text>
</comment>
<comment type="similarity">
    <text evidence="3">Belongs to the ATPase alpha/beta chains family.</text>
</comment>
<protein>
    <recommendedName>
        <fullName>ATP synthase subunit beta, mitochondrial</fullName>
        <ecNumber>7.1.2.2</ecNumber>
    </recommendedName>
</protein>
<keyword id="KW-0066">ATP synthesis</keyword>
<keyword id="KW-0067">ATP-binding</keyword>
<keyword id="KW-0139">CF(1)</keyword>
<keyword id="KW-0375">Hydrogen ion transport</keyword>
<keyword id="KW-0406">Ion transport</keyword>
<keyword id="KW-0472">Membrane</keyword>
<keyword id="KW-0496">Mitochondrion</keyword>
<keyword id="KW-0999">Mitochondrion inner membrane</keyword>
<keyword id="KW-0547">Nucleotide-binding</keyword>
<keyword id="KW-0809">Transit peptide</keyword>
<keyword id="KW-1278">Translocase</keyword>
<keyword id="KW-0813">Transport</keyword>
<gene>
    <name type="primary">ATPB</name>
</gene>
<accession>P29685</accession>
<proteinExistence type="evidence at transcript level"/>
<dbReference type="EC" id="7.1.2.2"/>
<dbReference type="EMBL" id="X58498">
    <property type="protein sequence ID" value="CAA41401.1"/>
    <property type="molecule type" value="mRNA"/>
</dbReference>
<dbReference type="PIR" id="S20504">
    <property type="entry name" value="S20504"/>
</dbReference>
<dbReference type="SMR" id="P29685"/>
<dbReference type="GO" id="GO:0005743">
    <property type="term" value="C:mitochondrial inner membrane"/>
    <property type="evidence" value="ECO:0007669"/>
    <property type="project" value="UniProtKB-SubCell"/>
</dbReference>
<dbReference type="GO" id="GO:0045259">
    <property type="term" value="C:proton-transporting ATP synthase complex"/>
    <property type="evidence" value="ECO:0007669"/>
    <property type="project" value="UniProtKB-KW"/>
</dbReference>
<dbReference type="GO" id="GO:0005524">
    <property type="term" value="F:ATP binding"/>
    <property type="evidence" value="ECO:0007669"/>
    <property type="project" value="UniProtKB-KW"/>
</dbReference>
<dbReference type="GO" id="GO:0016887">
    <property type="term" value="F:ATP hydrolysis activity"/>
    <property type="evidence" value="ECO:0007669"/>
    <property type="project" value="InterPro"/>
</dbReference>
<dbReference type="GO" id="GO:0046933">
    <property type="term" value="F:proton-transporting ATP synthase activity, rotational mechanism"/>
    <property type="evidence" value="ECO:0007669"/>
    <property type="project" value="InterPro"/>
</dbReference>
<dbReference type="GO" id="GO:0042776">
    <property type="term" value="P:proton motive force-driven mitochondrial ATP synthesis"/>
    <property type="evidence" value="ECO:0007669"/>
    <property type="project" value="TreeGrafter"/>
</dbReference>
<dbReference type="CDD" id="cd18110">
    <property type="entry name" value="ATP-synt_F1_beta_C"/>
    <property type="match status" value="1"/>
</dbReference>
<dbReference type="CDD" id="cd18115">
    <property type="entry name" value="ATP-synt_F1_beta_N"/>
    <property type="match status" value="1"/>
</dbReference>
<dbReference type="CDD" id="cd01133">
    <property type="entry name" value="F1-ATPase_beta_CD"/>
    <property type="match status" value="1"/>
</dbReference>
<dbReference type="FunFam" id="1.10.1140.10:FF:000001">
    <property type="entry name" value="ATP synthase subunit beta"/>
    <property type="match status" value="1"/>
</dbReference>
<dbReference type="FunFam" id="2.40.10.170:FF:000006">
    <property type="entry name" value="ATP synthase subunit beta"/>
    <property type="match status" value="1"/>
</dbReference>
<dbReference type="FunFam" id="3.40.50.300:FF:000026">
    <property type="entry name" value="ATP synthase subunit beta"/>
    <property type="match status" value="1"/>
</dbReference>
<dbReference type="Gene3D" id="2.40.10.170">
    <property type="match status" value="1"/>
</dbReference>
<dbReference type="Gene3D" id="1.10.10.910">
    <property type="entry name" value="ATP synthase, F1 beta subunit"/>
    <property type="match status" value="1"/>
</dbReference>
<dbReference type="Gene3D" id="1.10.1140.10">
    <property type="entry name" value="Bovine Mitochondrial F1-atpase, Atp Synthase Beta Chain, Chain D, domain 3"/>
    <property type="match status" value="1"/>
</dbReference>
<dbReference type="Gene3D" id="3.40.50.300">
    <property type="entry name" value="P-loop containing nucleotide triphosphate hydrolases"/>
    <property type="match status" value="1"/>
</dbReference>
<dbReference type="HAMAP" id="MF_01347">
    <property type="entry name" value="ATP_synth_beta_bact"/>
    <property type="match status" value="1"/>
</dbReference>
<dbReference type="InterPro" id="IPR003593">
    <property type="entry name" value="AAA+_ATPase"/>
</dbReference>
<dbReference type="InterPro" id="IPR055190">
    <property type="entry name" value="ATP-synt_VA_C"/>
</dbReference>
<dbReference type="InterPro" id="IPR042079">
    <property type="entry name" value="ATP_synt_F1_beta_sf"/>
</dbReference>
<dbReference type="InterPro" id="IPR020971">
    <property type="entry name" value="ATP_synth_F1_beta_su"/>
</dbReference>
<dbReference type="InterPro" id="IPR005722">
    <property type="entry name" value="ATP_synth_F1_bsu"/>
</dbReference>
<dbReference type="InterPro" id="IPR020003">
    <property type="entry name" value="ATPase_a/bsu_AS"/>
</dbReference>
<dbReference type="InterPro" id="IPR050053">
    <property type="entry name" value="ATPase_alpha/beta_chains"/>
</dbReference>
<dbReference type="InterPro" id="IPR004100">
    <property type="entry name" value="ATPase_F1/V1/A1_a/bsu_N"/>
</dbReference>
<dbReference type="InterPro" id="IPR036121">
    <property type="entry name" value="ATPase_F1/V1/A1_a/bsu_N_sf"/>
</dbReference>
<dbReference type="InterPro" id="IPR000194">
    <property type="entry name" value="ATPase_F1/V1/A1_a/bsu_nucl-bd"/>
</dbReference>
<dbReference type="InterPro" id="IPR024034">
    <property type="entry name" value="ATPase_F1/V1_b/a_C"/>
</dbReference>
<dbReference type="InterPro" id="IPR027417">
    <property type="entry name" value="P-loop_NTPase"/>
</dbReference>
<dbReference type="NCBIfam" id="TIGR01039">
    <property type="entry name" value="atpD"/>
    <property type="match status" value="1"/>
</dbReference>
<dbReference type="PANTHER" id="PTHR15184">
    <property type="entry name" value="ATP SYNTHASE"/>
    <property type="match status" value="1"/>
</dbReference>
<dbReference type="PANTHER" id="PTHR15184:SF80">
    <property type="entry name" value="ATP SYNTHASE SUBUNIT BETA-1, MITOCHONDRIAL-RELATED"/>
    <property type="match status" value="1"/>
</dbReference>
<dbReference type="Pfam" id="PF00006">
    <property type="entry name" value="ATP-synt_ab"/>
    <property type="match status" value="1"/>
</dbReference>
<dbReference type="Pfam" id="PF02874">
    <property type="entry name" value="ATP-synt_ab_N"/>
    <property type="match status" value="1"/>
</dbReference>
<dbReference type="Pfam" id="PF22919">
    <property type="entry name" value="ATP-synt_VA_C"/>
    <property type="match status" value="1"/>
</dbReference>
<dbReference type="Pfam" id="PF11421">
    <property type="entry name" value="Synthase_beta"/>
    <property type="match status" value="1"/>
</dbReference>
<dbReference type="PIRSF" id="PIRSF039072">
    <property type="entry name" value="ATPase_subunit_beta"/>
    <property type="match status" value="1"/>
</dbReference>
<dbReference type="SMART" id="SM00382">
    <property type="entry name" value="AAA"/>
    <property type="match status" value="1"/>
</dbReference>
<dbReference type="SUPFAM" id="SSF47917">
    <property type="entry name" value="C-terminal domain of alpha and beta subunits of F1 ATP synthase"/>
    <property type="match status" value="1"/>
</dbReference>
<dbReference type="SUPFAM" id="SSF50615">
    <property type="entry name" value="N-terminal domain of alpha and beta subunits of F1 ATP synthase"/>
    <property type="match status" value="1"/>
</dbReference>
<dbReference type="SUPFAM" id="SSF52540">
    <property type="entry name" value="P-loop containing nucleoside triphosphate hydrolases"/>
    <property type="match status" value="1"/>
</dbReference>
<dbReference type="PROSITE" id="PS00152">
    <property type="entry name" value="ATPASE_ALPHA_BETA"/>
    <property type="match status" value="1"/>
</dbReference>
<sequence>MASRRLLSSLLRSSSRRSVSKSPISNINPKLSSSSPSSKSRASPYGYLLTRAAEYATSAAAAAPPQPPPAKPEGGKGGGKITDEFTGKGAIGQVCQVIGAVVDVRFDEGLPPILTSLEVLDHSIRLVLEVAQHMGEGMVRTIAMDGTEGLVRGQRVLNTGSPITVPVGRANPWTYHEVIGEPIDERGDIKTSHFLPIHREAPAFVDQATEQQILVTGIKVVDLLAPYQRGGKIGLFGGAGVGKTVLIMELINNVAKAHGGFSVFAGVGERTREGNDLYREMIESGVIKLGDKQADSKCALVYGQMNEPPGARARVGLTGLTVAEHFRDAEGQDVLLFIDNIFRFTQANSEVSALLGRIPSAVGYQPTLATDLGGLQERITTTKKGSITSVQAIYVPADDLTDPAPATTFAHLDATTVLSRQISELGIYPAVDPLDSTSRMLSPHILGEEHYNTARGVQKVLQNYKNLQDIIAILGMDELSEDDKLTVARARKIQRFLSQPFHVAEVFTGAPGKYVELKESITSFQGVLDGKYDDLPEQSFYMVGGIDEVIAKADKIAKESAS</sequence>
<name>ATPBM_HEVBR</name>
<evidence type="ECO:0000250" key="1"/>
<evidence type="ECO:0000256" key="2">
    <source>
        <dbReference type="SAM" id="MobiDB-lite"/>
    </source>
</evidence>
<evidence type="ECO:0000305" key="3"/>
<reference key="1">
    <citation type="journal article" date="1992" name="Plant Mol. Biol.">
        <title>Isolation and nucleotide sequence of a cDNA clone encoding the beta subunit of mitochondrial ATP synthase from Hevea brasiliensis.</title>
        <authorList>
            <person name="Chye M.L."/>
            <person name="Tan C.T."/>
        </authorList>
    </citation>
    <scope>NUCLEOTIDE SEQUENCE [MRNA]</scope>
    <source>
        <strain>cv. RRIM 600</strain>
    </source>
</reference>
<organism>
    <name type="scientific">Hevea brasiliensis</name>
    <name type="common">Para rubber tree</name>
    <name type="synonym">Siphonia brasiliensis</name>
    <dbReference type="NCBI Taxonomy" id="3981"/>
    <lineage>
        <taxon>Eukaryota</taxon>
        <taxon>Viridiplantae</taxon>
        <taxon>Streptophyta</taxon>
        <taxon>Embryophyta</taxon>
        <taxon>Tracheophyta</taxon>
        <taxon>Spermatophyta</taxon>
        <taxon>Magnoliopsida</taxon>
        <taxon>eudicotyledons</taxon>
        <taxon>Gunneridae</taxon>
        <taxon>Pentapetalae</taxon>
        <taxon>rosids</taxon>
        <taxon>fabids</taxon>
        <taxon>Malpighiales</taxon>
        <taxon>Euphorbiaceae</taxon>
        <taxon>Crotonoideae</taxon>
        <taxon>Micrandreae</taxon>
        <taxon>Hevea</taxon>
    </lineage>
</organism>
<feature type="transit peptide" description="Mitochondrion" evidence="1">
    <location>
        <begin position="1"/>
        <end position="55"/>
    </location>
</feature>
<feature type="chain" id="PRO_0000002438" description="ATP synthase subunit beta, mitochondrial">
    <location>
        <begin position="56"/>
        <end position="562"/>
    </location>
</feature>
<feature type="region of interest" description="Disordered" evidence="2">
    <location>
        <begin position="1"/>
        <end position="43"/>
    </location>
</feature>
<feature type="region of interest" description="Disordered" evidence="2">
    <location>
        <begin position="58"/>
        <end position="83"/>
    </location>
</feature>
<feature type="compositionally biased region" description="Low complexity" evidence="2">
    <location>
        <begin position="1"/>
        <end position="13"/>
    </location>
</feature>
<feature type="compositionally biased region" description="Low complexity" evidence="2">
    <location>
        <begin position="20"/>
        <end position="40"/>
    </location>
</feature>
<feature type="binding site" evidence="1">
    <location>
        <begin position="237"/>
        <end position="244"/>
    </location>
    <ligand>
        <name>ATP</name>
        <dbReference type="ChEBI" id="CHEBI:30616"/>
    </ligand>
</feature>